<sequence>MASKTYTAGVKDYRETYWEPDYKIKDSDLLAVFKVTPQPGVDREEAAAAVAAESSTGTWTTVWTDLLTDLEHYKGRAYKVEDVPGDDEAFYAFIAYPIDLFEEGSIVNVFTSLVGNVFGFKAVRALRLEDVRFPLHFVMTCPGPPNGIQVERDKMNKYGRPLLGCTIKPKLGLSAKNYGRAVYECLRGGLDFTKDDENVNSQPFMRWRDRFEFVMEAIQKAEEETGERKGHYLNVTAPTPEEMYKRAEFAKELGAPIIMHDYITAGFCAHQGLANWCRDNGMLLHIHRAMHAVLDRNPNHGIHFRVLTKILRLMGGDQLHTGTVVGKLEGDRQSTLGWIDLLRKPYIEEDRSRGLFFDQDWGAMPGAFAVASGGIHVWHMPALLSIFGDDAVFQFGGGTLGHPWGNAAGAAANRVALEACVKARNEGRELEKEGKEILTEAAKSSPELKAAMETWKEIKFEFDTVDKLDTAHR</sequence>
<dbReference type="EC" id="4.1.1.39" evidence="1"/>
<dbReference type="EMBL" id="CP000544">
    <property type="protein sequence ID" value="ABM61822.1"/>
    <property type="molecule type" value="Genomic_DNA"/>
</dbReference>
<dbReference type="RefSeq" id="WP_011813845.1">
    <property type="nucleotide sequence ID" value="NC_008789.1"/>
</dbReference>
<dbReference type="SMR" id="A1WVW0"/>
<dbReference type="STRING" id="349124.Hhal_1046"/>
<dbReference type="KEGG" id="hha:Hhal_1046"/>
<dbReference type="eggNOG" id="COG1850">
    <property type="taxonomic scope" value="Bacteria"/>
</dbReference>
<dbReference type="HOGENOM" id="CLU_031450_2_0_6"/>
<dbReference type="OrthoDB" id="9770811at2"/>
<dbReference type="Proteomes" id="UP000000647">
    <property type="component" value="Chromosome"/>
</dbReference>
<dbReference type="GO" id="GO:0000287">
    <property type="term" value="F:magnesium ion binding"/>
    <property type="evidence" value="ECO:0007669"/>
    <property type="project" value="UniProtKB-UniRule"/>
</dbReference>
<dbReference type="GO" id="GO:0004497">
    <property type="term" value="F:monooxygenase activity"/>
    <property type="evidence" value="ECO:0007669"/>
    <property type="project" value="UniProtKB-KW"/>
</dbReference>
<dbReference type="GO" id="GO:0016984">
    <property type="term" value="F:ribulose-bisphosphate carboxylase activity"/>
    <property type="evidence" value="ECO:0007669"/>
    <property type="project" value="UniProtKB-UniRule"/>
</dbReference>
<dbReference type="GO" id="GO:0019253">
    <property type="term" value="P:reductive pentose-phosphate cycle"/>
    <property type="evidence" value="ECO:0007669"/>
    <property type="project" value="UniProtKB-UniRule"/>
</dbReference>
<dbReference type="Gene3D" id="3.20.20.110">
    <property type="entry name" value="Ribulose bisphosphate carboxylase, large subunit, C-terminal domain"/>
    <property type="match status" value="1"/>
</dbReference>
<dbReference type="Gene3D" id="3.30.70.150">
    <property type="entry name" value="RuBisCO large subunit, N-terminal domain"/>
    <property type="match status" value="1"/>
</dbReference>
<dbReference type="HAMAP" id="MF_01338">
    <property type="entry name" value="RuBisCO_L_type1"/>
    <property type="match status" value="1"/>
</dbReference>
<dbReference type="InterPro" id="IPR033966">
    <property type="entry name" value="RuBisCO"/>
</dbReference>
<dbReference type="InterPro" id="IPR020878">
    <property type="entry name" value="RuBisCo_large_chain_AS"/>
</dbReference>
<dbReference type="InterPro" id="IPR000685">
    <property type="entry name" value="RuBisCO_lsu_C"/>
</dbReference>
<dbReference type="InterPro" id="IPR036376">
    <property type="entry name" value="RuBisCO_lsu_C_sf"/>
</dbReference>
<dbReference type="InterPro" id="IPR017443">
    <property type="entry name" value="RuBisCO_lsu_fd_N"/>
</dbReference>
<dbReference type="InterPro" id="IPR036422">
    <property type="entry name" value="RuBisCO_lsu_N_sf"/>
</dbReference>
<dbReference type="InterPro" id="IPR020888">
    <property type="entry name" value="RuBisCO_lsuI"/>
</dbReference>
<dbReference type="NCBIfam" id="NF003252">
    <property type="entry name" value="PRK04208.1"/>
    <property type="match status" value="1"/>
</dbReference>
<dbReference type="PANTHER" id="PTHR42704">
    <property type="entry name" value="RIBULOSE BISPHOSPHATE CARBOXYLASE"/>
    <property type="match status" value="1"/>
</dbReference>
<dbReference type="PANTHER" id="PTHR42704:SF17">
    <property type="entry name" value="RIBULOSE BISPHOSPHATE CARBOXYLASE LARGE CHAIN"/>
    <property type="match status" value="1"/>
</dbReference>
<dbReference type="Pfam" id="PF00016">
    <property type="entry name" value="RuBisCO_large"/>
    <property type="match status" value="1"/>
</dbReference>
<dbReference type="Pfam" id="PF02788">
    <property type="entry name" value="RuBisCO_large_N"/>
    <property type="match status" value="1"/>
</dbReference>
<dbReference type="SFLD" id="SFLDG01052">
    <property type="entry name" value="RuBisCO"/>
    <property type="match status" value="1"/>
</dbReference>
<dbReference type="SFLD" id="SFLDS00014">
    <property type="entry name" value="RuBisCO"/>
    <property type="match status" value="1"/>
</dbReference>
<dbReference type="SFLD" id="SFLDG00301">
    <property type="entry name" value="RuBisCO-like_proteins"/>
    <property type="match status" value="1"/>
</dbReference>
<dbReference type="SUPFAM" id="SSF51649">
    <property type="entry name" value="RuBisCo, C-terminal domain"/>
    <property type="match status" value="1"/>
</dbReference>
<dbReference type="SUPFAM" id="SSF54966">
    <property type="entry name" value="RuBisCO, large subunit, small (N-terminal) domain"/>
    <property type="match status" value="1"/>
</dbReference>
<dbReference type="PROSITE" id="PS00157">
    <property type="entry name" value="RUBISCO_LARGE"/>
    <property type="match status" value="1"/>
</dbReference>
<gene>
    <name evidence="1" type="primary">cbbL</name>
    <name type="ordered locus">Hhal_1046</name>
</gene>
<feature type="chain" id="PRO_0000299963" description="Ribulose bisphosphate carboxylase large chain">
    <location>
        <begin position="1"/>
        <end position="473"/>
    </location>
</feature>
<feature type="active site" description="Proton acceptor" evidence="1">
    <location>
        <position position="168"/>
    </location>
</feature>
<feature type="active site" description="Proton acceptor" evidence="1">
    <location>
        <position position="287"/>
    </location>
</feature>
<feature type="binding site" description="in homodimeric partner" evidence="1">
    <location>
        <position position="116"/>
    </location>
    <ligand>
        <name>substrate</name>
    </ligand>
</feature>
<feature type="binding site" evidence="1">
    <location>
        <position position="166"/>
    </location>
    <ligand>
        <name>substrate</name>
    </ligand>
</feature>
<feature type="binding site" evidence="1">
    <location>
        <position position="170"/>
    </location>
    <ligand>
        <name>substrate</name>
    </ligand>
</feature>
<feature type="binding site" description="via carbamate group" evidence="1">
    <location>
        <position position="194"/>
    </location>
    <ligand>
        <name>Mg(2+)</name>
        <dbReference type="ChEBI" id="CHEBI:18420"/>
    </ligand>
</feature>
<feature type="binding site" evidence="1">
    <location>
        <position position="196"/>
    </location>
    <ligand>
        <name>Mg(2+)</name>
        <dbReference type="ChEBI" id="CHEBI:18420"/>
    </ligand>
</feature>
<feature type="binding site" evidence="1">
    <location>
        <position position="197"/>
    </location>
    <ligand>
        <name>Mg(2+)</name>
        <dbReference type="ChEBI" id="CHEBI:18420"/>
    </ligand>
</feature>
<feature type="binding site" evidence="1">
    <location>
        <position position="288"/>
    </location>
    <ligand>
        <name>substrate</name>
    </ligand>
</feature>
<feature type="binding site" evidence="1">
    <location>
        <position position="320"/>
    </location>
    <ligand>
        <name>substrate</name>
    </ligand>
</feature>
<feature type="binding site" evidence="1">
    <location>
        <position position="372"/>
    </location>
    <ligand>
        <name>substrate</name>
    </ligand>
</feature>
<feature type="site" description="Transition state stabilizer" evidence="1">
    <location>
        <position position="327"/>
    </location>
</feature>
<feature type="modified residue" description="N6-carboxylysine" evidence="1">
    <location>
        <position position="194"/>
    </location>
</feature>
<reference key="1">
    <citation type="submission" date="2006-12" db="EMBL/GenBank/DDBJ databases">
        <title>Complete sequence of Halorhodospira halophila SL1.</title>
        <authorList>
            <consortium name="US DOE Joint Genome Institute"/>
            <person name="Copeland A."/>
            <person name="Lucas S."/>
            <person name="Lapidus A."/>
            <person name="Barry K."/>
            <person name="Detter J.C."/>
            <person name="Glavina del Rio T."/>
            <person name="Hammon N."/>
            <person name="Israni S."/>
            <person name="Dalin E."/>
            <person name="Tice H."/>
            <person name="Pitluck S."/>
            <person name="Saunders E."/>
            <person name="Brettin T."/>
            <person name="Bruce D."/>
            <person name="Han C."/>
            <person name="Tapia R."/>
            <person name="Schmutz J."/>
            <person name="Larimer F."/>
            <person name="Land M."/>
            <person name="Hauser L."/>
            <person name="Kyrpides N."/>
            <person name="Mikhailova N."/>
            <person name="Hoff W."/>
            <person name="Richardson P."/>
        </authorList>
    </citation>
    <scope>NUCLEOTIDE SEQUENCE [LARGE SCALE GENOMIC DNA]</scope>
    <source>
        <strain>DSM 244 / SL1</strain>
    </source>
</reference>
<accession>A1WVW0</accession>
<comment type="function">
    <text evidence="1">RuBisCO catalyzes two reactions: the carboxylation of D-ribulose 1,5-bisphosphate, the primary event in carbon dioxide fixation, as well as the oxidative fragmentation of the pentose substrate. Both reactions occur simultaneously and in competition at the same active site.</text>
</comment>
<comment type="catalytic activity">
    <reaction evidence="1">
        <text>2 (2R)-3-phosphoglycerate + 2 H(+) = D-ribulose 1,5-bisphosphate + CO2 + H2O</text>
        <dbReference type="Rhea" id="RHEA:23124"/>
        <dbReference type="ChEBI" id="CHEBI:15377"/>
        <dbReference type="ChEBI" id="CHEBI:15378"/>
        <dbReference type="ChEBI" id="CHEBI:16526"/>
        <dbReference type="ChEBI" id="CHEBI:57870"/>
        <dbReference type="ChEBI" id="CHEBI:58272"/>
        <dbReference type="EC" id="4.1.1.39"/>
    </reaction>
</comment>
<comment type="catalytic activity">
    <reaction evidence="1">
        <text>D-ribulose 1,5-bisphosphate + O2 = 2-phosphoglycolate + (2R)-3-phosphoglycerate + 2 H(+)</text>
        <dbReference type="Rhea" id="RHEA:36631"/>
        <dbReference type="ChEBI" id="CHEBI:15378"/>
        <dbReference type="ChEBI" id="CHEBI:15379"/>
        <dbReference type="ChEBI" id="CHEBI:57870"/>
        <dbReference type="ChEBI" id="CHEBI:58033"/>
        <dbReference type="ChEBI" id="CHEBI:58272"/>
    </reaction>
</comment>
<comment type="cofactor">
    <cofactor evidence="1">
        <name>Mg(2+)</name>
        <dbReference type="ChEBI" id="CHEBI:18420"/>
    </cofactor>
    <text evidence="1">Binds 1 Mg(2+) ion per subunit.</text>
</comment>
<comment type="subunit">
    <text evidence="1">Heterohexadecamer of 8 large chains and 8 small chains.</text>
</comment>
<comment type="miscellaneous">
    <text evidence="1">The basic functional RuBisCO is composed of a large chain homodimer in a 'head-to-tail' conformation. In form I RuBisCO this homodimer is arranged in a barrel-like tetramer with the small subunits forming a tetrameric 'cap' on each end of the 'barrel'.</text>
</comment>
<comment type="similarity">
    <text evidence="1">Belongs to the RuBisCO large chain family. Type I subfamily.</text>
</comment>
<protein>
    <recommendedName>
        <fullName evidence="1">Ribulose bisphosphate carboxylase large chain</fullName>
        <shortName evidence="1">RuBisCO large subunit</shortName>
        <ecNumber evidence="1">4.1.1.39</ecNumber>
    </recommendedName>
</protein>
<organism>
    <name type="scientific">Halorhodospira halophila (strain DSM 244 / SL1)</name>
    <name type="common">Ectothiorhodospira halophila (strain DSM 244 / SL1)</name>
    <dbReference type="NCBI Taxonomy" id="349124"/>
    <lineage>
        <taxon>Bacteria</taxon>
        <taxon>Pseudomonadati</taxon>
        <taxon>Pseudomonadota</taxon>
        <taxon>Gammaproteobacteria</taxon>
        <taxon>Chromatiales</taxon>
        <taxon>Ectothiorhodospiraceae</taxon>
        <taxon>Halorhodospira</taxon>
    </lineage>
</organism>
<evidence type="ECO:0000255" key="1">
    <source>
        <dbReference type="HAMAP-Rule" id="MF_01338"/>
    </source>
</evidence>
<proteinExistence type="inferred from homology"/>
<keyword id="KW-0113">Calvin cycle</keyword>
<keyword id="KW-0120">Carbon dioxide fixation</keyword>
<keyword id="KW-0456">Lyase</keyword>
<keyword id="KW-0460">Magnesium</keyword>
<keyword id="KW-0479">Metal-binding</keyword>
<keyword id="KW-0503">Monooxygenase</keyword>
<keyword id="KW-0560">Oxidoreductase</keyword>
<keyword id="KW-1185">Reference proteome</keyword>
<name>RBL_HALHL</name>